<protein>
    <recommendedName>
        <fullName>Tubulin beta-2B chain</fullName>
    </recommendedName>
</protein>
<comment type="function">
    <text evidence="9 12 13 15">Tubulin is the major constituent of microtubules, a cylinder consisting of laterally associated linear protofilaments composed of alpha- and beta-tubulin heterodimers (PubMed:23001566, PubMed:26732629, PubMed:28013290). Microtubules grow by the addition of GTP-tubulin dimers to the microtubule end, where a stabilizing cap forms. Below the cap, tubulin dimers are in GDP-bound state, owing to GTPase activity of alpha-tubulin. Plays a critical role in proper axon guidance in both central and peripheral axon tracts (PubMed:23001566). Implicated in neuronal migration (PubMed:19465910).</text>
</comment>
<comment type="cofactor">
    <cofactor evidence="2">
        <name>Mg(2+)</name>
        <dbReference type="ChEBI" id="CHEBI:18420"/>
    </cofactor>
</comment>
<comment type="subunit">
    <text evidence="12 13 15">Dimer of alpha and beta chains (PubMed:23001566, PubMed:26732629, PubMed:28013290). A typical microtubule is a hollow water-filled tube with an outer diameter of 25 nm and an inner diameter of 15 nM. Alpha-beta heterodimers associate head-to-tail to form protofilaments running lengthwise along the microtubule wall with the beta-tubulin subunit facing the microtubule plus end conferring a structural polarity. Microtubules usually have 13 protofilaments but different protofilament numbers can be found in some organisms and specialized cells.</text>
</comment>
<comment type="interaction">
    <interactant intactId="EBI-355665">
        <id>Q9BVA1</id>
    </interactant>
    <interactant intactId="EBI-766279">
        <id>O00555</id>
        <label>CACNA1A</label>
    </interactant>
    <organismsDiffer>false</organismsDiffer>
    <experiments>2</experiments>
</comment>
<comment type="subcellular location">
    <subcellularLocation>
        <location evidence="12 15">Cytoplasm</location>
        <location evidence="12 15">Cytoskeleton</location>
    </subcellularLocation>
</comment>
<comment type="tissue specificity">
    <text evidence="10">High expression in brain.</text>
</comment>
<comment type="domain">
    <text evidence="1">The MREI motif is common among all beta-tubulin isoforms and may be critical for tubulin autoregulation.</text>
</comment>
<comment type="PTM">
    <text evidence="3 14">Some glutamate residues at the C-terminus are polyglutamylated, resulting in polyglutamate chains on the gamma-carboxyl group (PubMed:26875866). Polyglutamylation plays a key role in microtubule severing by spastin (SPAST). SPAST preferentially recognizes and acts on microtubules decorated with short polyglutamate tails: severing activity by SPAST increases as the number of glutamates per tubulin rises from one to eight, but decreases beyond this glutamylation threshold (PubMed:26875866). Glutamylation is also involved in cilia motility (By similarity).</text>
</comment>
<comment type="PTM">
    <text evidence="1 17">Some glutamate residues at the C-terminus are monoglycylated but not polyglycylated due to the absence of functional TTLL10 in human. Monoglycylation is mainly limited to tubulin incorporated into cilia and flagella axonemes, which is required for their stability and maintenance. Flagella glycylation controls sperm motility. Both polyglutamylation and monoglycylation can coexist on the same protein on adjacent residues, and lowering glycylation levels increases polyglutamylation, and reciprocally.</text>
</comment>
<comment type="PTM">
    <text evidence="8">Phosphorylated on Ser-172 by CDK1 during the cell cycle, from metaphase to telophase, but not in interphase. This phosphorylation inhibits tubulin incorporation into microtubules.</text>
</comment>
<comment type="disease" evidence="9 11 12 13">
    <disease id="DI-02622">
        <name>Cortical dysplasia, complex, with other brain malformations 7</name>
        <acronym>CDCBM7</acronym>
        <description>A malformation of the cortex in which the brain surface is irregular and characterized by an excessive number of small gyri with abnormal lamination. Polymicrogyria is a heterogeneous disorder, considered to be the result of postmigratory abnormal cortical organization.</description>
        <dbReference type="MIM" id="610031"/>
    </disease>
    <text>The disease is caused by variants affecting the gene represented in this entry.</text>
</comment>
<comment type="disease">
    <text evidence="15">Defects in TUBB2B may be involved in cerebellar ataxia, intellectual disability, and dysequilibrium syndrome (CAMRQ).</text>
</comment>
<comment type="similarity">
    <text evidence="16">Belongs to the tubulin family.</text>
</comment>
<sequence>MREIVHIQAGQCGNQIGAKFWEVISDEHGIDPTGSYHGDSDLQLERINVYYNEATGNKYVPRAILVDLEPGTMDSVRSGPFGQIFRPDNFVFGQSGAGNNWAKGHYTEGAELVDSVLDVVRKESESCDCLQGFQLTHSLGGGTGSGMGTLLISKIREEYPDRIMNTFSVMPSPKVSDTVVEPYNATLSVHQLVENTDETYCIDNEALYDICFRTLKLTTPTYGDLNHLVSATMSGVTTCLRFPGQLNADLRKLAVNMVPFPRLHFFMPGFAPLTSRGSQQYRALTVPELTQQMFDSKNMMAACDPRHGRYLTVAAIFRGRMSMKEVDEQMLNVQNKNSSYFVEWIPNNVKTAVCDIPPRGLKMSATFIGNSTAIQELFKRISEQFTAMFRRKAFLHWYTGEGMDEMEFTEAESNMNDLVSEYQQYQDATADEQGEFEEEEGEDEA</sequence>
<feature type="chain" id="PRO_0000262651" description="Tubulin beta-2B chain">
    <location>
        <begin position="1"/>
        <end position="445"/>
    </location>
</feature>
<feature type="region of interest" description="Disordered" evidence="7">
    <location>
        <begin position="422"/>
        <end position="445"/>
    </location>
</feature>
<feature type="short sequence motif" description="MREI motif" evidence="1">
    <location>
        <begin position="1"/>
        <end position="4"/>
    </location>
</feature>
<feature type="compositionally biased region" description="Acidic residues" evidence="7">
    <location>
        <begin position="429"/>
        <end position="445"/>
    </location>
</feature>
<feature type="binding site" evidence="4">
    <location>
        <position position="11"/>
    </location>
    <ligand>
        <name>GTP</name>
        <dbReference type="ChEBI" id="CHEBI:37565"/>
    </ligand>
</feature>
<feature type="binding site" evidence="2">
    <location>
        <position position="69"/>
    </location>
    <ligand>
        <name>GTP</name>
        <dbReference type="ChEBI" id="CHEBI:37565"/>
    </ligand>
</feature>
<feature type="binding site" evidence="2">
    <location>
        <position position="69"/>
    </location>
    <ligand>
        <name>Mg(2+)</name>
        <dbReference type="ChEBI" id="CHEBI:18420"/>
    </ligand>
</feature>
<feature type="binding site" evidence="4">
    <location>
        <position position="138"/>
    </location>
    <ligand>
        <name>GTP</name>
        <dbReference type="ChEBI" id="CHEBI:37565"/>
    </ligand>
</feature>
<feature type="binding site" evidence="4">
    <location>
        <position position="142"/>
    </location>
    <ligand>
        <name>GTP</name>
        <dbReference type="ChEBI" id="CHEBI:37565"/>
    </ligand>
</feature>
<feature type="binding site" evidence="4">
    <location>
        <position position="143"/>
    </location>
    <ligand>
        <name>GTP</name>
        <dbReference type="ChEBI" id="CHEBI:37565"/>
    </ligand>
</feature>
<feature type="binding site" evidence="4">
    <location>
        <position position="144"/>
    </location>
    <ligand>
        <name>GTP</name>
        <dbReference type="ChEBI" id="CHEBI:37565"/>
    </ligand>
</feature>
<feature type="binding site" evidence="4">
    <location>
        <position position="204"/>
    </location>
    <ligand>
        <name>GTP</name>
        <dbReference type="ChEBI" id="CHEBI:37565"/>
    </ligand>
</feature>
<feature type="binding site" evidence="4">
    <location>
        <position position="226"/>
    </location>
    <ligand>
        <name>GTP</name>
        <dbReference type="ChEBI" id="CHEBI:37565"/>
    </ligand>
</feature>
<feature type="modified residue" description="Phosphoserine" evidence="3">
    <location>
        <position position="40"/>
    </location>
</feature>
<feature type="modified residue" description="Phosphothreonine" evidence="6">
    <location>
        <position position="55"/>
    </location>
</feature>
<feature type="modified residue" description="N6-acetyllysine; alternate" evidence="1">
    <location>
        <position position="58"/>
    </location>
</feature>
<feature type="modified residue" description="N6-succinyllysine; alternate" evidence="3">
    <location>
        <position position="58"/>
    </location>
</feature>
<feature type="modified residue" description="Phosphoserine; by CDK1" evidence="8">
    <location>
        <position position="172"/>
    </location>
</feature>
<feature type="modified residue" description="Phosphothreonine" evidence="1">
    <location>
        <position position="285"/>
    </location>
</feature>
<feature type="modified residue" description="Phosphothreonine" evidence="1">
    <location>
        <position position="290"/>
    </location>
</feature>
<feature type="modified residue" description="Omega-N-methylarginine" evidence="1">
    <location>
        <position position="318"/>
    </location>
</feature>
<feature type="modified residue" description="5-glutamyl polyglutamate" evidence="5">
    <location>
        <position position="438"/>
    </location>
</feature>
<feature type="cross-link" description="Glycyl lysine isopeptide (Lys-Gly) (interchain with G-Cter in ubiquitin); alternate" evidence="1">
    <location>
        <position position="58"/>
    </location>
</feature>
<feature type="cross-link" description="Glycyl lysine isopeptide (Lys-Gly) (interchain with G-Cter in ubiquitin)" evidence="1">
    <location>
        <position position="324"/>
    </location>
</feature>
<feature type="sequence variant" id="VAR_078186" description="In CDCBM7; dbSNP:rs397514569." evidence="11">
    <original>L</original>
    <variation>P</variation>
    <location>
        <position position="117"/>
    </location>
</feature>
<feature type="sequence variant" id="VAR_063389" description="In CDCBM7; affects microtubules assembly; dbSNP:rs137853194." evidence="9">
    <original>S</original>
    <variation>P</variation>
    <location>
        <position position="172"/>
    </location>
</feature>
<feature type="sequence variant" id="VAR_063390" description="In dbSNP:rs201922441." evidence="9">
    <original>C</original>
    <variation>S</variation>
    <location>
        <position position="201"/>
    </location>
</feature>
<feature type="sequence variant" id="VAR_063391" description="In CDCBM7." evidence="9">
    <original>I</original>
    <variation>T</variation>
    <location>
        <position position="210"/>
    </location>
</feature>
<feature type="sequence variant" id="VAR_063392" description="In CDCBM7; dbSNP:rs137853195." evidence="9">
    <original>L</original>
    <variation>P</variation>
    <location>
        <position position="228"/>
    </location>
</feature>
<feature type="sequence variant" id="VAR_078187" description="In CDCBM7; decreased tubulin heterodimer formation; decreased ability to incorporate into the cytoskeleton; no effect on microtubules disintegration; increased ability to repolymerize; dbSNP:rs878853284." evidence="13">
    <original>C</original>
    <variation>F</variation>
    <location>
        <position position="239"/>
    </location>
</feature>
<feature type="sequence variant" id="VAR_078188" description="In CDCBM7; dbSNP:rs397514568." evidence="11">
    <original>N</original>
    <variation>S</variation>
    <location>
        <position position="256"/>
    </location>
</feature>
<feature type="sequence variant" id="VAR_063393" description="In CDCBM7; affects microtubules assembly; dbSNP:rs137853196." evidence="9">
    <original>F</original>
    <variation>L</variation>
    <location>
        <position position="265"/>
    </location>
</feature>
<feature type="sequence variant" id="VAR_063394" description="In CDCBM7; dbSNP:rs2113819014." evidence="9">
    <original>T</original>
    <variation>M</variation>
    <location>
        <position position="312"/>
    </location>
</feature>
<feature type="sequence variant" id="VAR_078189" description="Found in a patient with cerebellar ataxia intellectual disability and dysequilibrium syndrome; uncertain significance; no effect on protein folding; no effect on tubulin heterodimer formation; no effect on integration into the microtubule lattice; no effect on cytoskeleton subcellular location." evidence="15">
    <original>R</original>
    <variation>Q</variation>
    <location>
        <position position="390"/>
    </location>
</feature>
<feature type="sequence variant" id="VAR_078190" description="In CDCBM7; dbSNP:rs397514567." evidence="11">
    <original>D</original>
    <variation>N</variation>
    <location>
        <position position="417"/>
    </location>
</feature>
<feature type="sequence variant" id="VAR_078191" description="In CDCBM7; decreased protein expression; decreased tubulin heterodimer formation; no effect on integration into the microtubule lattice; no effect on microtubule cytoskeleton subcellular location; loss of axon guidance; dbSNP:rs398122369." evidence="12">
    <original>E</original>
    <variation>K</variation>
    <location>
        <position position="421"/>
    </location>
</feature>
<organism>
    <name type="scientific">Homo sapiens</name>
    <name type="common">Human</name>
    <dbReference type="NCBI Taxonomy" id="9606"/>
    <lineage>
        <taxon>Eukaryota</taxon>
        <taxon>Metazoa</taxon>
        <taxon>Chordata</taxon>
        <taxon>Craniata</taxon>
        <taxon>Vertebrata</taxon>
        <taxon>Euteleostomi</taxon>
        <taxon>Mammalia</taxon>
        <taxon>Eutheria</taxon>
        <taxon>Euarchontoglires</taxon>
        <taxon>Primates</taxon>
        <taxon>Haplorrhini</taxon>
        <taxon>Catarrhini</taxon>
        <taxon>Hominidae</taxon>
        <taxon>Homo</taxon>
    </lineage>
</organism>
<gene>
    <name type="primary">TUBB2B</name>
</gene>
<accession>Q9BVA1</accession>
<accession>A8K068</accession>
<proteinExistence type="evidence at protein level"/>
<reference key="1">
    <citation type="submission" date="2004-10" db="EMBL/GenBank/DDBJ databases">
        <title>Cloning of human full-length CDSs in BD Creator(TM) system donor vector.</title>
        <authorList>
            <person name="Kalnine N."/>
            <person name="Chen X."/>
            <person name="Rolfs A."/>
            <person name="Halleck A."/>
            <person name="Hines L."/>
            <person name="Eisenstein S."/>
            <person name="Koundinya M."/>
            <person name="Raphael J."/>
            <person name="Moreira D."/>
            <person name="Kelley T."/>
            <person name="LaBaer J."/>
            <person name="Lin Y."/>
            <person name="Phelan M."/>
            <person name="Farmer A."/>
        </authorList>
    </citation>
    <scope>NUCLEOTIDE SEQUENCE [LARGE SCALE MRNA]</scope>
</reference>
<reference key="2">
    <citation type="submission" date="2004-06" db="EMBL/GenBank/DDBJ databases">
        <title>Cloning of human full open reading frames in Gateway(TM) system entry vector (pDONR201).</title>
        <authorList>
            <person name="Ebert L."/>
            <person name="Schick M."/>
            <person name="Neubert P."/>
            <person name="Schatten R."/>
            <person name="Henze S."/>
            <person name="Korn B."/>
        </authorList>
    </citation>
    <scope>NUCLEOTIDE SEQUENCE [LARGE SCALE MRNA]</scope>
</reference>
<reference key="3">
    <citation type="journal article" date="2004" name="Nat. Genet.">
        <title>Complete sequencing and characterization of 21,243 full-length human cDNAs.</title>
        <authorList>
            <person name="Ota T."/>
            <person name="Suzuki Y."/>
            <person name="Nishikawa T."/>
            <person name="Otsuki T."/>
            <person name="Sugiyama T."/>
            <person name="Irie R."/>
            <person name="Wakamatsu A."/>
            <person name="Hayashi K."/>
            <person name="Sato H."/>
            <person name="Nagai K."/>
            <person name="Kimura K."/>
            <person name="Makita H."/>
            <person name="Sekine M."/>
            <person name="Obayashi M."/>
            <person name="Nishi T."/>
            <person name="Shibahara T."/>
            <person name="Tanaka T."/>
            <person name="Ishii S."/>
            <person name="Yamamoto J."/>
            <person name="Saito K."/>
            <person name="Kawai Y."/>
            <person name="Isono Y."/>
            <person name="Nakamura Y."/>
            <person name="Nagahari K."/>
            <person name="Murakami K."/>
            <person name="Yasuda T."/>
            <person name="Iwayanagi T."/>
            <person name="Wagatsuma M."/>
            <person name="Shiratori A."/>
            <person name="Sudo H."/>
            <person name="Hosoiri T."/>
            <person name="Kaku Y."/>
            <person name="Kodaira H."/>
            <person name="Kondo H."/>
            <person name="Sugawara M."/>
            <person name="Takahashi M."/>
            <person name="Kanda K."/>
            <person name="Yokoi T."/>
            <person name="Furuya T."/>
            <person name="Kikkawa E."/>
            <person name="Omura Y."/>
            <person name="Abe K."/>
            <person name="Kamihara K."/>
            <person name="Katsuta N."/>
            <person name="Sato K."/>
            <person name="Tanikawa M."/>
            <person name="Yamazaki M."/>
            <person name="Ninomiya K."/>
            <person name="Ishibashi T."/>
            <person name="Yamashita H."/>
            <person name="Murakawa K."/>
            <person name="Fujimori K."/>
            <person name="Tanai H."/>
            <person name="Kimata M."/>
            <person name="Watanabe M."/>
            <person name="Hiraoka S."/>
            <person name="Chiba Y."/>
            <person name="Ishida S."/>
            <person name="Ono Y."/>
            <person name="Takiguchi S."/>
            <person name="Watanabe S."/>
            <person name="Yosida M."/>
            <person name="Hotuta T."/>
            <person name="Kusano J."/>
            <person name="Kanehori K."/>
            <person name="Takahashi-Fujii A."/>
            <person name="Hara H."/>
            <person name="Tanase T.-O."/>
            <person name="Nomura Y."/>
            <person name="Togiya S."/>
            <person name="Komai F."/>
            <person name="Hara R."/>
            <person name="Takeuchi K."/>
            <person name="Arita M."/>
            <person name="Imose N."/>
            <person name="Musashino K."/>
            <person name="Yuuki H."/>
            <person name="Oshima A."/>
            <person name="Sasaki N."/>
            <person name="Aotsuka S."/>
            <person name="Yoshikawa Y."/>
            <person name="Matsunawa H."/>
            <person name="Ichihara T."/>
            <person name="Shiohata N."/>
            <person name="Sano S."/>
            <person name="Moriya S."/>
            <person name="Momiyama H."/>
            <person name="Satoh N."/>
            <person name="Takami S."/>
            <person name="Terashima Y."/>
            <person name="Suzuki O."/>
            <person name="Nakagawa S."/>
            <person name="Senoh A."/>
            <person name="Mizoguchi H."/>
            <person name="Goto Y."/>
            <person name="Shimizu F."/>
            <person name="Wakebe H."/>
            <person name="Hishigaki H."/>
            <person name="Watanabe T."/>
            <person name="Sugiyama A."/>
            <person name="Takemoto M."/>
            <person name="Kawakami B."/>
            <person name="Yamazaki M."/>
            <person name="Watanabe K."/>
            <person name="Kumagai A."/>
            <person name="Itakura S."/>
            <person name="Fukuzumi Y."/>
            <person name="Fujimori Y."/>
            <person name="Komiyama M."/>
            <person name="Tashiro H."/>
            <person name="Tanigami A."/>
            <person name="Fujiwara T."/>
            <person name="Ono T."/>
            <person name="Yamada K."/>
            <person name="Fujii Y."/>
            <person name="Ozaki K."/>
            <person name="Hirao M."/>
            <person name="Ohmori Y."/>
            <person name="Kawabata A."/>
            <person name="Hikiji T."/>
            <person name="Kobatake N."/>
            <person name="Inagaki H."/>
            <person name="Ikema Y."/>
            <person name="Okamoto S."/>
            <person name="Okitani R."/>
            <person name="Kawakami T."/>
            <person name="Noguchi S."/>
            <person name="Itoh T."/>
            <person name="Shigeta K."/>
            <person name="Senba T."/>
            <person name="Matsumura K."/>
            <person name="Nakajima Y."/>
            <person name="Mizuno T."/>
            <person name="Morinaga M."/>
            <person name="Sasaki M."/>
            <person name="Togashi T."/>
            <person name="Oyama M."/>
            <person name="Hata H."/>
            <person name="Watanabe M."/>
            <person name="Komatsu T."/>
            <person name="Mizushima-Sugano J."/>
            <person name="Satoh T."/>
            <person name="Shirai Y."/>
            <person name="Takahashi Y."/>
            <person name="Nakagawa K."/>
            <person name="Okumura K."/>
            <person name="Nagase T."/>
            <person name="Nomura N."/>
            <person name="Kikuchi H."/>
            <person name="Masuho Y."/>
            <person name="Yamashita R."/>
            <person name="Nakai K."/>
            <person name="Yada T."/>
            <person name="Nakamura Y."/>
            <person name="Ohara O."/>
            <person name="Isogai T."/>
            <person name="Sugano S."/>
        </authorList>
    </citation>
    <scope>NUCLEOTIDE SEQUENCE [LARGE SCALE MRNA]</scope>
</reference>
<reference key="4">
    <citation type="journal article" date="2003" name="Nature">
        <title>The DNA sequence and analysis of human chromosome 6.</title>
        <authorList>
            <person name="Mungall A.J."/>
            <person name="Palmer S.A."/>
            <person name="Sims S.K."/>
            <person name="Edwards C.A."/>
            <person name="Ashurst J.L."/>
            <person name="Wilming L."/>
            <person name="Jones M.C."/>
            <person name="Horton R."/>
            <person name="Hunt S.E."/>
            <person name="Scott C.E."/>
            <person name="Gilbert J.G.R."/>
            <person name="Clamp M.E."/>
            <person name="Bethel G."/>
            <person name="Milne S."/>
            <person name="Ainscough R."/>
            <person name="Almeida J.P."/>
            <person name="Ambrose K.D."/>
            <person name="Andrews T.D."/>
            <person name="Ashwell R.I.S."/>
            <person name="Babbage A.K."/>
            <person name="Bagguley C.L."/>
            <person name="Bailey J."/>
            <person name="Banerjee R."/>
            <person name="Barker D.J."/>
            <person name="Barlow K.F."/>
            <person name="Bates K."/>
            <person name="Beare D.M."/>
            <person name="Beasley H."/>
            <person name="Beasley O."/>
            <person name="Bird C.P."/>
            <person name="Blakey S.E."/>
            <person name="Bray-Allen S."/>
            <person name="Brook J."/>
            <person name="Brown A.J."/>
            <person name="Brown J.Y."/>
            <person name="Burford D.C."/>
            <person name="Burrill W."/>
            <person name="Burton J."/>
            <person name="Carder C."/>
            <person name="Carter N.P."/>
            <person name="Chapman J.C."/>
            <person name="Clark S.Y."/>
            <person name="Clark G."/>
            <person name="Clee C.M."/>
            <person name="Clegg S."/>
            <person name="Cobley V."/>
            <person name="Collier R.E."/>
            <person name="Collins J.E."/>
            <person name="Colman L.K."/>
            <person name="Corby N.R."/>
            <person name="Coville G.J."/>
            <person name="Culley K.M."/>
            <person name="Dhami P."/>
            <person name="Davies J."/>
            <person name="Dunn M."/>
            <person name="Earthrowl M.E."/>
            <person name="Ellington A.E."/>
            <person name="Evans K.A."/>
            <person name="Faulkner L."/>
            <person name="Francis M.D."/>
            <person name="Frankish A."/>
            <person name="Frankland J."/>
            <person name="French L."/>
            <person name="Garner P."/>
            <person name="Garnett J."/>
            <person name="Ghori M.J."/>
            <person name="Gilby L.M."/>
            <person name="Gillson C.J."/>
            <person name="Glithero R.J."/>
            <person name="Grafham D.V."/>
            <person name="Grant M."/>
            <person name="Gribble S."/>
            <person name="Griffiths C."/>
            <person name="Griffiths M.N.D."/>
            <person name="Hall R."/>
            <person name="Halls K.S."/>
            <person name="Hammond S."/>
            <person name="Harley J.L."/>
            <person name="Hart E.A."/>
            <person name="Heath P.D."/>
            <person name="Heathcott R."/>
            <person name="Holmes S.J."/>
            <person name="Howden P.J."/>
            <person name="Howe K.L."/>
            <person name="Howell G.R."/>
            <person name="Huckle E."/>
            <person name="Humphray S.J."/>
            <person name="Humphries M.D."/>
            <person name="Hunt A.R."/>
            <person name="Johnson C.M."/>
            <person name="Joy A.A."/>
            <person name="Kay M."/>
            <person name="Keenan S.J."/>
            <person name="Kimberley A.M."/>
            <person name="King A."/>
            <person name="Laird G.K."/>
            <person name="Langford C."/>
            <person name="Lawlor S."/>
            <person name="Leongamornlert D.A."/>
            <person name="Leversha M."/>
            <person name="Lloyd C.R."/>
            <person name="Lloyd D.M."/>
            <person name="Loveland J.E."/>
            <person name="Lovell J."/>
            <person name="Martin S."/>
            <person name="Mashreghi-Mohammadi M."/>
            <person name="Maslen G.L."/>
            <person name="Matthews L."/>
            <person name="McCann O.T."/>
            <person name="McLaren S.J."/>
            <person name="McLay K."/>
            <person name="McMurray A."/>
            <person name="Moore M.J.F."/>
            <person name="Mullikin J.C."/>
            <person name="Niblett D."/>
            <person name="Nickerson T."/>
            <person name="Novik K.L."/>
            <person name="Oliver K."/>
            <person name="Overton-Larty E.K."/>
            <person name="Parker A."/>
            <person name="Patel R."/>
            <person name="Pearce A.V."/>
            <person name="Peck A.I."/>
            <person name="Phillimore B.J.C.T."/>
            <person name="Phillips S."/>
            <person name="Plumb R.W."/>
            <person name="Porter K.M."/>
            <person name="Ramsey Y."/>
            <person name="Ranby S.A."/>
            <person name="Rice C.M."/>
            <person name="Ross M.T."/>
            <person name="Searle S.M."/>
            <person name="Sehra H.K."/>
            <person name="Sheridan E."/>
            <person name="Skuce C.D."/>
            <person name="Smith S."/>
            <person name="Smith M."/>
            <person name="Spraggon L."/>
            <person name="Squares S.L."/>
            <person name="Steward C.A."/>
            <person name="Sycamore N."/>
            <person name="Tamlyn-Hall G."/>
            <person name="Tester J."/>
            <person name="Theaker A.J."/>
            <person name="Thomas D.W."/>
            <person name="Thorpe A."/>
            <person name="Tracey A."/>
            <person name="Tromans A."/>
            <person name="Tubby B."/>
            <person name="Wall M."/>
            <person name="Wallis J.M."/>
            <person name="West A.P."/>
            <person name="White S.S."/>
            <person name="Whitehead S.L."/>
            <person name="Whittaker H."/>
            <person name="Wild A."/>
            <person name="Willey D.J."/>
            <person name="Wilmer T.E."/>
            <person name="Wood J.M."/>
            <person name="Wray P.W."/>
            <person name="Wyatt J.C."/>
            <person name="Young L."/>
            <person name="Younger R.M."/>
            <person name="Bentley D.R."/>
            <person name="Coulson A."/>
            <person name="Durbin R.M."/>
            <person name="Hubbard T."/>
            <person name="Sulston J.E."/>
            <person name="Dunham I."/>
            <person name="Rogers J."/>
            <person name="Beck S."/>
        </authorList>
    </citation>
    <scope>NUCLEOTIDE SEQUENCE [LARGE SCALE GENOMIC DNA]</scope>
</reference>
<reference key="5">
    <citation type="submission" date="2005-07" db="EMBL/GenBank/DDBJ databases">
        <authorList>
            <person name="Mural R.J."/>
            <person name="Istrail S."/>
            <person name="Sutton G.G."/>
            <person name="Florea L."/>
            <person name="Halpern A.L."/>
            <person name="Mobarry C.M."/>
            <person name="Lippert R."/>
            <person name="Walenz B."/>
            <person name="Shatkay H."/>
            <person name="Dew I."/>
            <person name="Miller J.R."/>
            <person name="Flanigan M.J."/>
            <person name="Edwards N.J."/>
            <person name="Bolanos R."/>
            <person name="Fasulo D."/>
            <person name="Halldorsson B.V."/>
            <person name="Hannenhalli S."/>
            <person name="Turner R."/>
            <person name="Yooseph S."/>
            <person name="Lu F."/>
            <person name="Nusskern D.R."/>
            <person name="Shue B.C."/>
            <person name="Zheng X.H."/>
            <person name="Zhong F."/>
            <person name="Delcher A.L."/>
            <person name="Huson D.H."/>
            <person name="Kravitz S.A."/>
            <person name="Mouchard L."/>
            <person name="Reinert K."/>
            <person name="Remington K.A."/>
            <person name="Clark A.G."/>
            <person name="Waterman M.S."/>
            <person name="Eichler E.E."/>
            <person name="Adams M.D."/>
            <person name="Hunkapiller M.W."/>
            <person name="Myers E.W."/>
            <person name="Venter J.C."/>
        </authorList>
    </citation>
    <scope>NUCLEOTIDE SEQUENCE [LARGE SCALE GENOMIC DNA]</scope>
</reference>
<reference key="6">
    <citation type="journal article" date="2004" name="Genome Res.">
        <title>The status, quality, and expansion of the NIH full-length cDNA project: the Mammalian Gene Collection (MGC).</title>
        <authorList>
            <consortium name="The MGC Project Team"/>
        </authorList>
    </citation>
    <scope>NUCLEOTIDE SEQUENCE [LARGE SCALE MRNA]</scope>
    <source>
        <tissue>Brain</tissue>
        <tissue>Muscle</tissue>
    </source>
</reference>
<reference key="7">
    <citation type="submission" date="2008-12" db="UniProtKB">
        <authorList>
            <person name="Lubec G."/>
            <person name="Afjehi-Sadat L."/>
            <person name="Chen W.-Q."/>
            <person name="Sun Y."/>
        </authorList>
    </citation>
    <scope>PROTEIN SEQUENCE OF 47-58; 63-121; 163-174; 217-276; 283-297; 310-318; 325-359; 363-379 AND 381-390</scope>
    <scope>IDENTIFICATION BY MASS SPECTROMETRY</scope>
    <source>
        <tissue>Brain</tissue>
        <tissue>Cajal-Retzius cell</tissue>
        <tissue>Fetal brain cortex</tissue>
    </source>
</reference>
<reference key="8">
    <citation type="journal article" date="2006" name="Mol. Biol. Cell">
        <title>Microtubule regulation in mitosis: tubulin phosphorylation by the cyclin-dependent kinase Cdk1.</title>
        <authorList>
            <person name="Fourest-Lieuvin A."/>
            <person name="Peris L."/>
            <person name="Gache V."/>
            <person name="Garcia-Saez I."/>
            <person name="Juillan-Binard C."/>
            <person name="Lantez V."/>
            <person name="Job D."/>
        </authorList>
    </citation>
    <scope>PHOSPHORYLATION AT SER-172</scope>
</reference>
<reference key="9">
    <citation type="journal article" date="2009" name="Cell">
        <title>Evolutionary divergence of enzymatic mechanisms for posttranslational polyglycylation.</title>
        <authorList>
            <person name="Rogowski K."/>
            <person name="Juge F."/>
            <person name="van Dijk J."/>
            <person name="Wloga D."/>
            <person name="Strub J.-M."/>
            <person name="Levilliers N."/>
            <person name="Thomas D."/>
            <person name="Bre M.-H."/>
            <person name="Van Dorsselaer A."/>
            <person name="Gaertig J."/>
            <person name="Janke C."/>
        </authorList>
    </citation>
    <scope>GLYCYLATION</scope>
</reference>
<reference key="10">
    <citation type="journal article" date="2009" name="Nat. Genet.">
        <title>Mutations in the beta-tubulin gene TUBB2B result in asymmetrical polymicrogyria.</title>
        <authorList>
            <person name="Jaglin X.H."/>
            <person name="Poirier K."/>
            <person name="Saillour Y."/>
            <person name="Buhler E."/>
            <person name="Tian G."/>
            <person name="Bahi-Buisson N."/>
            <person name="Fallet-Bianco C."/>
            <person name="Phan-Dinh-Tuy F."/>
            <person name="Kong X.P."/>
            <person name="Bomont P."/>
            <person name="Castelnau-Ptakhine L."/>
            <person name="Odent S."/>
            <person name="Loget P."/>
            <person name="Kossorotoff M."/>
            <person name="Snoeck I."/>
            <person name="Plessis G."/>
            <person name="Parent P."/>
            <person name="Beldjord C."/>
            <person name="Cardoso C."/>
            <person name="Represa A."/>
            <person name="Flint J."/>
            <person name="Keays D.A."/>
            <person name="Cowan N.J."/>
            <person name="Chelly J."/>
        </authorList>
    </citation>
    <scope>FUNCTION</scope>
    <scope>VARIANTS CDCBM7 PRO-172; THR-210; PRO-228; LEU-265 AND MET-312</scope>
    <scope>VARIANT SER-201</scope>
    <scope>CHARACTERIZATION OF VARIANTS CDCBM7 PRO-172 AND LEU-265</scope>
</reference>
<reference key="11">
    <citation type="journal article" date="2010" name="Cytoskeleton">
        <title>Tumoral and tissue-specific expression of the major human beta-tubulin isotypes.</title>
        <authorList>
            <person name="Leandro-Garcia L.J."/>
            <person name="Leskela S."/>
            <person name="Landa I."/>
            <person name="Montero-Conde C."/>
            <person name="Lopez-Jimenez E."/>
            <person name="Leton R."/>
            <person name="Cascon A."/>
            <person name="Robledo M."/>
            <person name="Rodriguez-Antona C."/>
        </authorList>
    </citation>
    <scope>TISSUE SPECIFICITY</scope>
</reference>
<reference key="12">
    <citation type="journal article" date="2011" name="BMC Syst. Biol.">
        <title>Initial characterization of the human central proteome.</title>
        <authorList>
            <person name="Burkard T.R."/>
            <person name="Planyavsky M."/>
            <person name="Kaupe I."/>
            <person name="Breitwieser F.P."/>
            <person name="Buerckstuemmer T."/>
            <person name="Bennett K.L."/>
            <person name="Superti-Furga G."/>
            <person name="Colinge J."/>
        </authorList>
    </citation>
    <scope>IDENTIFICATION BY MASS SPECTROMETRY [LARGE SCALE ANALYSIS]</scope>
</reference>
<reference key="13">
    <citation type="journal article" date="2016" name="Cell">
        <title>Graded control of microtubule severing by tubulin glutamylation.</title>
        <authorList>
            <person name="Valenstein M.L."/>
            <person name="Roll-Mecak A."/>
        </authorList>
    </citation>
    <scope>GLUTAMYLATION</scope>
</reference>
<reference key="14">
    <citation type="journal article" date="2012" name="Eur. J. Hum. Genet.">
        <title>Symmetric polymicrogyria and pachygyria associated with TUBB2B gene mutations.</title>
        <authorList>
            <person name="Guerrini R."/>
            <person name="Mei D."/>
            <person name="Cordelli D.M."/>
            <person name="Pucatti D."/>
            <person name="Franzoni E."/>
            <person name="Parrini E."/>
        </authorList>
    </citation>
    <scope>VARIANTS CDCBM7 PRO-117; SER-256 AND ASN-417</scope>
    <scope>INVOLVEMENT IN CDCBM7</scope>
</reference>
<reference key="15">
    <citation type="journal article" date="2012" name="Hum. Mol. Genet.">
        <title>An inherited TUBB2B mutation alters a kinesin-binding site and causes polymicrogyria, CFEOM and axon dysinnervation.</title>
        <authorList>
            <person name="Cederquist G.Y."/>
            <person name="Luchniak A."/>
            <person name="Tischfield M.A."/>
            <person name="Peeva M."/>
            <person name="Song Y."/>
            <person name="Menezes M.P."/>
            <person name="Chan W.M."/>
            <person name="Andrews C."/>
            <person name="Chew S."/>
            <person name="Jamieson R.V."/>
            <person name="Gomes L."/>
            <person name="Flaherty M."/>
            <person name="Grant P.E."/>
            <person name="Gupta M.L. Jr."/>
            <person name="Engle E.C."/>
        </authorList>
    </citation>
    <scope>VARIANT CDCBM7 LYS-421</scope>
    <scope>CHARACTERIZATION OF VARIANT CDCBM7 LYS-421</scope>
    <scope>FUNCTION</scope>
    <scope>SUBUNIT</scope>
    <scope>SUBCELLULAR LOCATION</scope>
</reference>
<reference key="16">
    <citation type="journal article" date="2016" name="Eur. J. Med. Genet.">
        <title>De novo TUBB2B mutation causes fetal akinesia deformation sequence with microlissencephaly: An unusual presentation of tubulinopathy.</title>
        <authorList>
            <person name="Laquerriere A."/>
            <person name="Gonzales M."/>
            <person name="Saillour Y."/>
            <person name="Cavallin M."/>
            <person name="Joye N."/>
            <person name="Quelin C."/>
            <person name="Bidat L."/>
            <person name="Dommergues M."/>
            <person name="Plessis G."/>
            <person name="Encha-Razavi F."/>
            <person name="Chelly J."/>
            <person name="Bahi-Buisson N."/>
            <person name="Poirier K."/>
        </authorList>
    </citation>
    <scope>VARIANT CDCBM7 PHE-239</scope>
    <scope>CHARACTERIZATION OF VARIANT CDCBM7 PHE-239</scope>
    <scope>INVOLVEMENT IN CDCBM7</scope>
    <scope>FUNCTION</scope>
    <scope>SUBUNIT</scope>
</reference>
<reference key="17">
    <citation type="journal article" date="2017" name="Hum. Mol. Genet.">
        <title>Uner Tan syndrome caused by a homozygous TUBB2B mutation affecting microtubule stability.</title>
        <authorList>
            <person name="Breuss M.W."/>
            <person name="Nguyen T."/>
            <person name="Srivatsan A."/>
            <person name="Leca I."/>
            <person name="Tian G."/>
            <person name="Fritz T."/>
            <person name="Hansen A.H."/>
            <person name="Musaev D."/>
            <person name="McEvoy-Venneri J."/>
            <person name="James K.N."/>
            <person name="Rosti R.O."/>
            <person name="Scott E."/>
            <person name="Tan U."/>
            <person name="Kolodner R.D."/>
            <person name="Cowan N.J."/>
            <person name="Keays D.A."/>
            <person name="Gleeson J.G."/>
        </authorList>
    </citation>
    <scope>VARIANT GLN-390</scope>
    <scope>CHARACTERIZATION OF VARIANT GLN-390</scope>
    <scope>FUNCTION</scope>
    <scope>SUBUNIT</scope>
    <scope>SUBCELLULAR LOCATION</scope>
</reference>
<name>TBB2B_HUMAN</name>
<dbReference type="EMBL" id="BT019930">
    <property type="protein sequence ID" value="AAV38733.1"/>
    <property type="molecule type" value="mRNA"/>
</dbReference>
<dbReference type="EMBL" id="CR456788">
    <property type="protein sequence ID" value="CAG33069.1"/>
    <property type="molecule type" value="mRNA"/>
</dbReference>
<dbReference type="EMBL" id="AK289433">
    <property type="protein sequence ID" value="BAF82122.1"/>
    <property type="molecule type" value="mRNA"/>
</dbReference>
<dbReference type="EMBL" id="AL445309">
    <property type="status" value="NOT_ANNOTATED_CDS"/>
    <property type="molecule type" value="Genomic_DNA"/>
</dbReference>
<dbReference type="EMBL" id="CH471087">
    <property type="protein sequence ID" value="EAW55125.1"/>
    <property type="molecule type" value="Genomic_DNA"/>
</dbReference>
<dbReference type="EMBL" id="BC001352">
    <property type="protein sequence ID" value="AAH01352.1"/>
    <property type="molecule type" value="mRNA"/>
</dbReference>
<dbReference type="EMBL" id="BC063610">
    <property type="protein sequence ID" value="AAH63610.1"/>
    <property type="molecule type" value="mRNA"/>
</dbReference>
<dbReference type="CCDS" id="CCDS4485.1"/>
<dbReference type="RefSeq" id="NP_821080.1">
    <property type="nucleotide sequence ID" value="NM_178012.5"/>
</dbReference>
<dbReference type="PDB" id="6E7C">
    <property type="method" value="EM"/>
    <property type="resolution" value="3.65 A"/>
    <property type="chains" value="B=1-426"/>
</dbReference>
<dbReference type="PDB" id="7ZCW">
    <property type="method" value="EM"/>
    <property type="resolution" value="3.60 A"/>
    <property type="chains" value="B/F/G/H=1-445"/>
</dbReference>
<dbReference type="PDBsum" id="6E7C"/>
<dbReference type="PDBsum" id="7ZCW"/>
<dbReference type="EMDB" id="EMD-14634"/>
<dbReference type="EMDB" id="EMD-8998"/>
<dbReference type="SMR" id="Q9BVA1"/>
<dbReference type="BioGRID" id="131483">
    <property type="interactions" value="241"/>
</dbReference>
<dbReference type="CORUM" id="Q9BVA1"/>
<dbReference type="FunCoup" id="Q9BVA1">
    <property type="interactions" value="1008"/>
</dbReference>
<dbReference type="IntAct" id="Q9BVA1">
    <property type="interactions" value="135"/>
</dbReference>
<dbReference type="MINT" id="Q9BVA1"/>
<dbReference type="STRING" id="9606.ENSP00000259818"/>
<dbReference type="ChEMBL" id="CHEMBL2095182"/>
<dbReference type="DrugBank" id="DB07574">
    <property type="generic name" value="2-MERCAPTO-N-[1,2,3,10-TETRAMETHOXY-9-OXO-5,6,7,9-TETRAHYDRO-BENZO[A]HEPTALEN-7-YL]ACETAMIDE"/>
</dbReference>
<dbReference type="DrugBank" id="DB05147">
    <property type="generic name" value="CYT997"/>
</dbReference>
<dbReference type="DrugCentral" id="Q9BVA1"/>
<dbReference type="GlyGen" id="Q9BVA1">
    <property type="glycosylation" value="1 site, 1 O-linked glycan (1 site)"/>
</dbReference>
<dbReference type="iPTMnet" id="Q9BVA1"/>
<dbReference type="PhosphoSitePlus" id="Q9BVA1"/>
<dbReference type="SwissPalm" id="Q9BVA1"/>
<dbReference type="BioMuta" id="TUBB2B"/>
<dbReference type="DMDM" id="74761283"/>
<dbReference type="jPOST" id="Q9BVA1"/>
<dbReference type="MassIVE" id="Q9BVA1"/>
<dbReference type="PaxDb" id="9606-ENSP00000259818"/>
<dbReference type="PeptideAtlas" id="Q9BVA1"/>
<dbReference type="PRIDE" id="Q9BVA1"/>
<dbReference type="ProteomicsDB" id="79190"/>
<dbReference type="Pumba" id="Q9BVA1"/>
<dbReference type="TopDownProteomics" id="Q9BVA1"/>
<dbReference type="Antibodypedia" id="24394">
    <property type="antibodies" value="370 antibodies from 23 providers"/>
</dbReference>
<dbReference type="DNASU" id="347733"/>
<dbReference type="Ensembl" id="ENST00000259818.8">
    <property type="protein sequence ID" value="ENSP00000259818.6"/>
    <property type="gene ID" value="ENSG00000137285.11"/>
</dbReference>
<dbReference type="GeneID" id="347733"/>
<dbReference type="KEGG" id="hsa:347733"/>
<dbReference type="MANE-Select" id="ENST00000259818.8">
    <property type="protein sequence ID" value="ENSP00000259818.6"/>
    <property type="RefSeq nucleotide sequence ID" value="NM_178012.5"/>
    <property type="RefSeq protein sequence ID" value="NP_821080.1"/>
</dbReference>
<dbReference type="UCSC" id="uc003mvg.4">
    <property type="organism name" value="human"/>
</dbReference>
<dbReference type="AGR" id="HGNC:30829"/>
<dbReference type="CTD" id="347733"/>
<dbReference type="DisGeNET" id="347733"/>
<dbReference type="GeneCards" id="TUBB2B"/>
<dbReference type="GeneReviews" id="TUBB2B"/>
<dbReference type="HGNC" id="HGNC:30829">
    <property type="gene designation" value="TUBB2B"/>
</dbReference>
<dbReference type="HPA" id="ENSG00000137285">
    <property type="expression patterns" value="Tissue enriched (brain)"/>
</dbReference>
<dbReference type="MalaCards" id="TUBB2B"/>
<dbReference type="MIM" id="610031">
    <property type="type" value="phenotype"/>
</dbReference>
<dbReference type="MIM" id="612850">
    <property type="type" value="gene"/>
</dbReference>
<dbReference type="neXtProt" id="NX_Q9BVA1"/>
<dbReference type="OpenTargets" id="ENSG00000137285"/>
<dbReference type="Orphanet" id="45358">
    <property type="disease" value="Congenital fibrosis of extraocular muscles"/>
</dbReference>
<dbReference type="Orphanet" id="1766">
    <property type="disease" value="Dysequilibrium syndrome"/>
</dbReference>
<dbReference type="Orphanet" id="300573">
    <property type="disease" value="Polymicrogyria due to TUBB2B mutation"/>
</dbReference>
<dbReference type="Orphanet" id="467166">
    <property type="disease" value="Tubulinopathy-associated dysgyria"/>
</dbReference>
<dbReference type="PharmGKB" id="PA142670671"/>
<dbReference type="VEuPathDB" id="HostDB:ENSG00000137285"/>
<dbReference type="eggNOG" id="KOG1375">
    <property type="taxonomic scope" value="Eukaryota"/>
</dbReference>
<dbReference type="GeneTree" id="ENSGT00940000154150"/>
<dbReference type="HOGENOM" id="CLU_015718_1_1_1"/>
<dbReference type="InParanoid" id="Q9BVA1"/>
<dbReference type="OMA" id="LERINXQ"/>
<dbReference type="OrthoDB" id="1662883at2759"/>
<dbReference type="PAN-GO" id="Q9BVA1">
    <property type="GO annotations" value="7 GO annotations based on evolutionary models"/>
</dbReference>
<dbReference type="PhylomeDB" id="Q9BVA1"/>
<dbReference type="TreeFam" id="TF300298"/>
<dbReference type="PathwayCommons" id="Q9BVA1"/>
<dbReference type="Reactome" id="R-HSA-1445148">
    <property type="pathway name" value="Translocation of SLC2A4 (GLUT4) to the plasma membrane"/>
</dbReference>
<dbReference type="Reactome" id="R-HSA-190840">
    <property type="pathway name" value="Microtubule-dependent trafficking of connexons from Golgi to the plasma membrane"/>
</dbReference>
<dbReference type="Reactome" id="R-HSA-190861">
    <property type="pathway name" value="Gap junction assembly"/>
</dbReference>
<dbReference type="Reactome" id="R-HSA-2132295">
    <property type="pathway name" value="MHC class II antigen presentation"/>
</dbReference>
<dbReference type="Reactome" id="R-HSA-2467813">
    <property type="pathway name" value="Separation of Sister Chromatids"/>
</dbReference>
<dbReference type="Reactome" id="R-HSA-2500257">
    <property type="pathway name" value="Resolution of Sister Chromatid Cohesion"/>
</dbReference>
<dbReference type="Reactome" id="R-HSA-3371497">
    <property type="pathway name" value="HSP90 chaperone cycle for steroid hormone receptors (SHR) in the presence of ligand"/>
</dbReference>
<dbReference type="Reactome" id="R-HSA-380320">
    <property type="pathway name" value="Recruitment of NuMA to mitotic centrosomes"/>
</dbReference>
<dbReference type="Reactome" id="R-HSA-389957">
    <property type="pathway name" value="Prefoldin mediated transfer of substrate to CCT/TriC"/>
</dbReference>
<dbReference type="Reactome" id="R-HSA-389960">
    <property type="pathway name" value="Formation of tubulin folding intermediates by CCT/TriC"/>
</dbReference>
<dbReference type="Reactome" id="R-HSA-389977">
    <property type="pathway name" value="Post-chaperonin tubulin folding pathway"/>
</dbReference>
<dbReference type="Reactome" id="R-HSA-437239">
    <property type="pathway name" value="Recycling pathway of L1"/>
</dbReference>
<dbReference type="Reactome" id="R-HSA-5610787">
    <property type="pathway name" value="Hedgehog 'off' state"/>
</dbReference>
<dbReference type="Reactome" id="R-HSA-5617833">
    <property type="pathway name" value="Cilium Assembly"/>
</dbReference>
<dbReference type="Reactome" id="R-HSA-5620924">
    <property type="pathway name" value="Intraflagellar transport"/>
</dbReference>
<dbReference type="Reactome" id="R-HSA-5626467">
    <property type="pathway name" value="RHO GTPases activate IQGAPs"/>
</dbReference>
<dbReference type="Reactome" id="R-HSA-5663220">
    <property type="pathway name" value="RHO GTPases Activate Formins"/>
</dbReference>
<dbReference type="Reactome" id="R-HSA-6807878">
    <property type="pathway name" value="COPI-mediated anterograde transport"/>
</dbReference>
<dbReference type="Reactome" id="R-HSA-6811434">
    <property type="pathway name" value="COPI-dependent Golgi-to-ER retrograde traffic"/>
</dbReference>
<dbReference type="Reactome" id="R-HSA-6811436">
    <property type="pathway name" value="COPI-independent Golgi-to-ER retrograde traffic"/>
</dbReference>
<dbReference type="Reactome" id="R-HSA-68877">
    <property type="pathway name" value="Mitotic Prometaphase"/>
</dbReference>
<dbReference type="Reactome" id="R-HSA-8852276">
    <property type="pathway name" value="The role of GTSE1 in G2/M progression after G2 checkpoint"/>
</dbReference>
<dbReference type="Reactome" id="R-HSA-8955332">
    <property type="pathway name" value="Carboxyterminal post-translational modifications of tubulin"/>
</dbReference>
<dbReference type="Reactome" id="R-HSA-9609690">
    <property type="pathway name" value="HCMV Early Events"/>
</dbReference>
<dbReference type="Reactome" id="R-HSA-9609736">
    <property type="pathway name" value="Assembly and cell surface presentation of NMDA receptors"/>
</dbReference>
<dbReference type="Reactome" id="R-HSA-9619483">
    <property type="pathway name" value="Activation of AMPK downstream of NMDARs"/>
</dbReference>
<dbReference type="Reactome" id="R-HSA-9646399">
    <property type="pathway name" value="Aggrephagy"/>
</dbReference>
<dbReference type="Reactome" id="R-HSA-9648025">
    <property type="pathway name" value="EML4 and NUDC in mitotic spindle formation"/>
</dbReference>
<dbReference type="Reactome" id="R-HSA-9668328">
    <property type="pathway name" value="Sealing of the nuclear envelope (NE) by ESCRT-III"/>
</dbReference>
<dbReference type="Reactome" id="R-HSA-983189">
    <property type="pathway name" value="Kinesins"/>
</dbReference>
<dbReference type="Reactome" id="R-HSA-9833482">
    <property type="pathway name" value="PKR-mediated signaling"/>
</dbReference>
<dbReference type="SignaLink" id="Q9BVA1"/>
<dbReference type="BioGRID-ORCS" id="347733">
    <property type="hits" value="36 hits in 1068 CRISPR screens"/>
</dbReference>
<dbReference type="CD-CODE" id="91857CE7">
    <property type="entry name" value="Nucleolus"/>
</dbReference>
<dbReference type="CD-CODE" id="FB4E32DD">
    <property type="entry name" value="Presynaptic clusters and postsynaptic densities"/>
</dbReference>
<dbReference type="ChiTaRS" id="TUBB2B">
    <property type="organism name" value="human"/>
</dbReference>
<dbReference type="GenomeRNAi" id="347733"/>
<dbReference type="Pharos" id="Q9BVA1">
    <property type="development level" value="Tclin"/>
</dbReference>
<dbReference type="PRO" id="PR:Q9BVA1"/>
<dbReference type="Proteomes" id="UP000005640">
    <property type="component" value="Chromosome 6"/>
</dbReference>
<dbReference type="RNAct" id="Q9BVA1">
    <property type="molecule type" value="protein"/>
</dbReference>
<dbReference type="Bgee" id="ENSG00000137285">
    <property type="expression patterns" value="Expressed in cortical plate and 181 other cell types or tissues"/>
</dbReference>
<dbReference type="ExpressionAtlas" id="Q9BVA1">
    <property type="expression patterns" value="baseline and differential"/>
</dbReference>
<dbReference type="GO" id="GO:0005737">
    <property type="term" value="C:cytoplasm"/>
    <property type="evidence" value="ECO:0000318"/>
    <property type="project" value="GO_Central"/>
</dbReference>
<dbReference type="GO" id="GO:0045171">
    <property type="term" value="C:intercellular bridge"/>
    <property type="evidence" value="ECO:0000314"/>
    <property type="project" value="HPA"/>
</dbReference>
<dbReference type="GO" id="GO:0005874">
    <property type="term" value="C:microtubule"/>
    <property type="evidence" value="ECO:0000314"/>
    <property type="project" value="UniProtKB"/>
</dbReference>
<dbReference type="GO" id="GO:0015630">
    <property type="term" value="C:microtubule cytoskeleton"/>
    <property type="evidence" value="ECO:0000314"/>
    <property type="project" value="UniProtKB"/>
</dbReference>
<dbReference type="GO" id="GO:0072686">
    <property type="term" value="C:mitotic spindle"/>
    <property type="evidence" value="ECO:0000314"/>
    <property type="project" value="HPA"/>
</dbReference>
<dbReference type="GO" id="GO:0005634">
    <property type="term" value="C:nucleus"/>
    <property type="evidence" value="ECO:0007005"/>
    <property type="project" value="UniProtKB"/>
</dbReference>
<dbReference type="GO" id="GO:0098685">
    <property type="term" value="C:Schaffer collateral - CA1 synapse"/>
    <property type="evidence" value="ECO:0007669"/>
    <property type="project" value="Ensembl"/>
</dbReference>
<dbReference type="GO" id="GO:0005525">
    <property type="term" value="F:GTP binding"/>
    <property type="evidence" value="ECO:0000318"/>
    <property type="project" value="GO_Central"/>
</dbReference>
<dbReference type="GO" id="GO:0003924">
    <property type="term" value="F:GTPase activity"/>
    <property type="evidence" value="ECO:0007669"/>
    <property type="project" value="InterPro"/>
</dbReference>
<dbReference type="GO" id="GO:0046872">
    <property type="term" value="F:metal ion binding"/>
    <property type="evidence" value="ECO:0007669"/>
    <property type="project" value="UniProtKB-KW"/>
</dbReference>
<dbReference type="GO" id="GO:0046982">
    <property type="term" value="F:protein heterodimerization activity"/>
    <property type="evidence" value="ECO:0000314"/>
    <property type="project" value="UniProtKB"/>
</dbReference>
<dbReference type="GO" id="GO:0005200">
    <property type="term" value="F:structural constituent of cytoskeleton"/>
    <property type="evidence" value="ECO:0000318"/>
    <property type="project" value="GO_Central"/>
</dbReference>
<dbReference type="GO" id="GO:0021987">
    <property type="term" value="P:cerebral cortex development"/>
    <property type="evidence" value="ECO:0007669"/>
    <property type="project" value="Ensembl"/>
</dbReference>
<dbReference type="GO" id="GO:1990403">
    <property type="term" value="P:embryonic brain development"/>
    <property type="evidence" value="ECO:0007669"/>
    <property type="project" value="Ensembl"/>
</dbReference>
<dbReference type="GO" id="GO:0000226">
    <property type="term" value="P:microtubule cytoskeleton organization"/>
    <property type="evidence" value="ECO:0000318"/>
    <property type="project" value="GO_Central"/>
</dbReference>
<dbReference type="GO" id="GO:0007017">
    <property type="term" value="P:microtubule-based process"/>
    <property type="evidence" value="ECO:0000315"/>
    <property type="project" value="UniProtKB"/>
</dbReference>
<dbReference type="GO" id="GO:0000278">
    <property type="term" value="P:mitotic cell cycle"/>
    <property type="evidence" value="ECO:0000318"/>
    <property type="project" value="GO_Central"/>
</dbReference>
<dbReference type="GO" id="GO:0050804">
    <property type="term" value="P:modulation of chemical synaptic transmission"/>
    <property type="evidence" value="ECO:0007669"/>
    <property type="project" value="Ensembl"/>
</dbReference>
<dbReference type="GO" id="GO:0001764">
    <property type="term" value="P:neuron migration"/>
    <property type="evidence" value="ECO:0000315"/>
    <property type="project" value="UniProtKB"/>
</dbReference>
<dbReference type="GO" id="GO:1902669">
    <property type="term" value="P:positive regulation of axon guidance"/>
    <property type="evidence" value="ECO:0000315"/>
    <property type="project" value="UniProtKB"/>
</dbReference>
<dbReference type="CDD" id="cd02187">
    <property type="entry name" value="beta_tubulin"/>
    <property type="match status" value="1"/>
</dbReference>
<dbReference type="FunFam" id="1.10.287.600:FF:000006">
    <property type="entry name" value="Tubulin beta chain"/>
    <property type="match status" value="1"/>
</dbReference>
<dbReference type="FunFam" id="3.30.1330.20:FF:000002">
    <property type="entry name" value="Tubulin beta chain"/>
    <property type="match status" value="1"/>
</dbReference>
<dbReference type="FunFam" id="3.40.50.1440:FF:000003">
    <property type="entry name" value="Tubulin beta chain"/>
    <property type="match status" value="1"/>
</dbReference>
<dbReference type="Gene3D" id="1.10.287.600">
    <property type="entry name" value="Helix hairpin bin"/>
    <property type="match status" value="1"/>
</dbReference>
<dbReference type="Gene3D" id="3.30.1330.20">
    <property type="entry name" value="Tubulin/FtsZ, C-terminal domain"/>
    <property type="match status" value="1"/>
</dbReference>
<dbReference type="Gene3D" id="3.40.50.1440">
    <property type="entry name" value="Tubulin/FtsZ, GTPase domain"/>
    <property type="match status" value="1"/>
</dbReference>
<dbReference type="InterPro" id="IPR013838">
    <property type="entry name" value="Beta-tubulin_BS"/>
</dbReference>
<dbReference type="InterPro" id="IPR002453">
    <property type="entry name" value="Beta_tubulin"/>
</dbReference>
<dbReference type="InterPro" id="IPR008280">
    <property type="entry name" value="Tub_FtsZ_C"/>
</dbReference>
<dbReference type="InterPro" id="IPR000217">
    <property type="entry name" value="Tubulin"/>
</dbReference>
<dbReference type="InterPro" id="IPR037103">
    <property type="entry name" value="Tubulin/FtsZ-like_C"/>
</dbReference>
<dbReference type="InterPro" id="IPR018316">
    <property type="entry name" value="Tubulin/FtsZ_2-layer-sand-dom"/>
</dbReference>
<dbReference type="InterPro" id="IPR036525">
    <property type="entry name" value="Tubulin/FtsZ_GTPase_sf"/>
</dbReference>
<dbReference type="InterPro" id="IPR023123">
    <property type="entry name" value="Tubulin_C"/>
</dbReference>
<dbReference type="InterPro" id="IPR017975">
    <property type="entry name" value="Tubulin_CS"/>
</dbReference>
<dbReference type="InterPro" id="IPR003008">
    <property type="entry name" value="Tubulin_FtsZ_GTPase"/>
</dbReference>
<dbReference type="PANTHER" id="PTHR11588">
    <property type="entry name" value="TUBULIN"/>
    <property type="match status" value="1"/>
</dbReference>
<dbReference type="Pfam" id="PF00091">
    <property type="entry name" value="Tubulin"/>
    <property type="match status" value="1"/>
</dbReference>
<dbReference type="Pfam" id="PF03953">
    <property type="entry name" value="Tubulin_C"/>
    <property type="match status" value="1"/>
</dbReference>
<dbReference type="PRINTS" id="PR01163">
    <property type="entry name" value="BETATUBULIN"/>
</dbReference>
<dbReference type="PRINTS" id="PR01161">
    <property type="entry name" value="TUBULIN"/>
</dbReference>
<dbReference type="SMART" id="SM00864">
    <property type="entry name" value="Tubulin"/>
    <property type="match status" value="1"/>
</dbReference>
<dbReference type="SMART" id="SM00865">
    <property type="entry name" value="Tubulin_C"/>
    <property type="match status" value="1"/>
</dbReference>
<dbReference type="SUPFAM" id="SSF55307">
    <property type="entry name" value="Tubulin C-terminal domain-like"/>
    <property type="match status" value="1"/>
</dbReference>
<dbReference type="SUPFAM" id="SSF52490">
    <property type="entry name" value="Tubulin nucleotide-binding domain-like"/>
    <property type="match status" value="1"/>
</dbReference>
<dbReference type="PROSITE" id="PS00227">
    <property type="entry name" value="TUBULIN"/>
    <property type="match status" value="1"/>
</dbReference>
<dbReference type="PROSITE" id="PS00228">
    <property type="entry name" value="TUBULIN_B_AUTOREG"/>
    <property type="match status" value="1"/>
</dbReference>
<evidence type="ECO:0000250" key="1">
    <source>
        <dbReference type="UniProtKB" id="P07437"/>
    </source>
</evidence>
<evidence type="ECO:0000250" key="2">
    <source>
        <dbReference type="UniProtKB" id="P68363"/>
    </source>
</evidence>
<evidence type="ECO:0000250" key="3">
    <source>
        <dbReference type="UniProtKB" id="P99024"/>
    </source>
</evidence>
<evidence type="ECO:0000250" key="4">
    <source>
        <dbReference type="UniProtKB" id="Q13509"/>
    </source>
</evidence>
<evidence type="ECO:0000250" key="5">
    <source>
        <dbReference type="UniProtKB" id="Q2T9S0"/>
    </source>
</evidence>
<evidence type="ECO:0000250" key="6">
    <source>
        <dbReference type="UniProtKB" id="Q3KRE8"/>
    </source>
</evidence>
<evidence type="ECO:0000256" key="7">
    <source>
        <dbReference type="SAM" id="MobiDB-lite"/>
    </source>
</evidence>
<evidence type="ECO:0000269" key="8">
    <source>
    </source>
</evidence>
<evidence type="ECO:0000269" key="9">
    <source>
    </source>
</evidence>
<evidence type="ECO:0000269" key="10">
    <source>
    </source>
</evidence>
<evidence type="ECO:0000269" key="11">
    <source>
    </source>
</evidence>
<evidence type="ECO:0000269" key="12">
    <source>
    </source>
</evidence>
<evidence type="ECO:0000269" key="13">
    <source>
    </source>
</evidence>
<evidence type="ECO:0000269" key="14">
    <source>
    </source>
</evidence>
<evidence type="ECO:0000269" key="15">
    <source>
    </source>
</evidence>
<evidence type="ECO:0000305" key="16"/>
<evidence type="ECO:0000305" key="17">
    <source>
    </source>
</evidence>
<keyword id="KW-0002">3D-structure</keyword>
<keyword id="KW-0007">Acetylation</keyword>
<keyword id="KW-0963">Cytoplasm</keyword>
<keyword id="KW-0206">Cytoskeleton</keyword>
<keyword id="KW-0903">Direct protein sequencing</keyword>
<keyword id="KW-0225">Disease variant</keyword>
<keyword id="KW-0342">GTP-binding</keyword>
<keyword id="KW-0991">Intellectual disability</keyword>
<keyword id="KW-1017">Isopeptide bond</keyword>
<keyword id="KW-0460">Magnesium</keyword>
<keyword id="KW-0479">Metal-binding</keyword>
<keyword id="KW-0488">Methylation</keyword>
<keyword id="KW-0493">Microtubule</keyword>
<keyword id="KW-0524">Neurogenesis</keyword>
<keyword id="KW-0547">Nucleotide-binding</keyword>
<keyword id="KW-0597">Phosphoprotein</keyword>
<keyword id="KW-1267">Proteomics identification</keyword>
<keyword id="KW-1185">Reference proteome</keyword>
<keyword id="KW-0832">Ubl conjugation</keyword>